<feature type="chain" id="PRO_1000061040" description="Probable 4-amino-4-deoxy-L-arabinose-phosphoundecaprenol flippase subunit ArnF">
    <location>
        <begin position="1"/>
        <end position="130"/>
    </location>
</feature>
<feature type="topological domain" description="Cytoplasmic" evidence="1">
    <location>
        <begin position="1"/>
        <end position="4"/>
    </location>
</feature>
<feature type="transmembrane region" description="Helical" evidence="1">
    <location>
        <begin position="5"/>
        <end position="25"/>
    </location>
</feature>
<feature type="topological domain" description="Periplasmic" evidence="1">
    <location>
        <begin position="26"/>
        <end position="47"/>
    </location>
</feature>
<feature type="transmembrane region" description="Helical" evidence="1">
    <location>
        <begin position="48"/>
        <end position="68"/>
    </location>
</feature>
<feature type="topological domain" description="Cytoplasmic" evidence="1">
    <location>
        <begin position="69"/>
        <end position="77"/>
    </location>
</feature>
<feature type="transmembrane region" description="Helical" evidence="1">
    <location>
        <begin position="78"/>
        <end position="98"/>
    </location>
</feature>
<feature type="topological domain" description="Periplasmic" evidence="1">
    <location>
        <position position="99"/>
    </location>
</feature>
<feature type="transmembrane region" description="Helical" evidence="1">
    <location>
        <begin position="100"/>
        <end position="120"/>
    </location>
</feature>
<feature type="topological domain" description="Cytoplasmic" evidence="1">
    <location>
        <begin position="121"/>
        <end position="130"/>
    </location>
</feature>
<protein>
    <recommendedName>
        <fullName evidence="1">Probable 4-amino-4-deoxy-L-arabinose-phosphoundecaprenol flippase subunit ArnF</fullName>
        <shortName evidence="1">L-Ara4N-phosphoundecaprenol flippase subunit ArnF</shortName>
    </recommendedName>
    <alternativeName>
        <fullName evidence="1">Undecaprenyl phosphate-aminoarabinose flippase subunit ArnF</fullName>
    </alternativeName>
</protein>
<keyword id="KW-0997">Cell inner membrane</keyword>
<keyword id="KW-1003">Cell membrane</keyword>
<keyword id="KW-0441">Lipid A biosynthesis</keyword>
<keyword id="KW-0444">Lipid biosynthesis</keyword>
<keyword id="KW-0443">Lipid metabolism</keyword>
<keyword id="KW-0448">Lipopolysaccharide biosynthesis</keyword>
<keyword id="KW-0472">Membrane</keyword>
<keyword id="KW-0812">Transmembrane</keyword>
<keyword id="KW-1133">Transmembrane helix</keyword>
<keyword id="KW-0813">Transport</keyword>
<organism>
    <name type="scientific">Serratia proteamaculans (strain 568)</name>
    <dbReference type="NCBI Taxonomy" id="399741"/>
    <lineage>
        <taxon>Bacteria</taxon>
        <taxon>Pseudomonadati</taxon>
        <taxon>Pseudomonadota</taxon>
        <taxon>Gammaproteobacteria</taxon>
        <taxon>Enterobacterales</taxon>
        <taxon>Yersiniaceae</taxon>
        <taxon>Serratia</taxon>
    </lineage>
</organism>
<evidence type="ECO:0000255" key="1">
    <source>
        <dbReference type="HAMAP-Rule" id="MF_00538"/>
    </source>
</evidence>
<gene>
    <name evidence="1" type="primary">arnF</name>
    <name type="ordered locus">Spro_2160</name>
</gene>
<comment type="function">
    <text evidence="1">Translocates 4-amino-4-deoxy-L-arabinose-phosphoundecaprenol (alpha-L-Ara4N-phosphoundecaprenol) from the cytoplasmic to the periplasmic side of the inner membrane.</text>
</comment>
<comment type="pathway">
    <text evidence="1">Bacterial outer membrane biogenesis; lipopolysaccharide biosynthesis.</text>
</comment>
<comment type="subunit">
    <text evidence="1">Heterodimer of ArnE and ArnF.</text>
</comment>
<comment type="subcellular location">
    <subcellularLocation>
        <location evidence="1">Cell inner membrane</location>
        <topology evidence="1">Multi-pass membrane protein</topology>
    </subcellularLocation>
</comment>
<comment type="similarity">
    <text evidence="1">Belongs to the ArnF family.</text>
</comment>
<sequence>MRGYAWGAASVLLVTLAQLLMKWGMAQIPLMSFADVTLNLFMQYWLPLVVVSGGIFGYALSMLCWFFALHHLPLNRAYPLLSVSYALVYLAAVILPWFNESATLLKTLGTLFILFGVWLINSQAKVKTPQ</sequence>
<proteinExistence type="inferred from homology"/>
<accession>A8GDS1</accession>
<reference key="1">
    <citation type="submission" date="2007-09" db="EMBL/GenBank/DDBJ databases">
        <title>Complete sequence of chromosome of Serratia proteamaculans 568.</title>
        <authorList>
            <consortium name="US DOE Joint Genome Institute"/>
            <person name="Copeland A."/>
            <person name="Lucas S."/>
            <person name="Lapidus A."/>
            <person name="Barry K."/>
            <person name="Glavina del Rio T."/>
            <person name="Dalin E."/>
            <person name="Tice H."/>
            <person name="Pitluck S."/>
            <person name="Chain P."/>
            <person name="Malfatti S."/>
            <person name="Shin M."/>
            <person name="Vergez L."/>
            <person name="Schmutz J."/>
            <person name="Larimer F."/>
            <person name="Land M."/>
            <person name="Hauser L."/>
            <person name="Kyrpides N."/>
            <person name="Kim E."/>
            <person name="Taghavi S."/>
            <person name="Newman L."/>
            <person name="Vangronsveld J."/>
            <person name="van der Lelie D."/>
            <person name="Richardson P."/>
        </authorList>
    </citation>
    <scope>NUCLEOTIDE SEQUENCE [LARGE SCALE GENOMIC DNA]</scope>
    <source>
        <strain>568</strain>
    </source>
</reference>
<dbReference type="EMBL" id="CP000826">
    <property type="protein sequence ID" value="ABV41261.1"/>
    <property type="molecule type" value="Genomic_DNA"/>
</dbReference>
<dbReference type="STRING" id="399741.Spro_2160"/>
<dbReference type="KEGG" id="spe:Spro_2160"/>
<dbReference type="eggNOG" id="COG2076">
    <property type="taxonomic scope" value="Bacteria"/>
</dbReference>
<dbReference type="HOGENOM" id="CLU_131462_1_0_6"/>
<dbReference type="OrthoDB" id="5592809at2"/>
<dbReference type="UniPathway" id="UPA00030"/>
<dbReference type="GO" id="GO:0005886">
    <property type="term" value="C:plasma membrane"/>
    <property type="evidence" value="ECO:0007669"/>
    <property type="project" value="UniProtKB-SubCell"/>
</dbReference>
<dbReference type="GO" id="GO:1901505">
    <property type="term" value="F:carbohydrate derivative transmembrane transporter activity"/>
    <property type="evidence" value="ECO:0007669"/>
    <property type="project" value="InterPro"/>
</dbReference>
<dbReference type="GO" id="GO:0009245">
    <property type="term" value="P:lipid A biosynthetic process"/>
    <property type="evidence" value="ECO:0007669"/>
    <property type="project" value="UniProtKB-UniRule"/>
</dbReference>
<dbReference type="GO" id="GO:0009103">
    <property type="term" value="P:lipopolysaccharide biosynthetic process"/>
    <property type="evidence" value="ECO:0007669"/>
    <property type="project" value="UniProtKB-UniRule"/>
</dbReference>
<dbReference type="Gene3D" id="1.10.3730.20">
    <property type="match status" value="1"/>
</dbReference>
<dbReference type="HAMAP" id="MF_00538">
    <property type="entry name" value="Flippase_ArnF"/>
    <property type="match status" value="1"/>
</dbReference>
<dbReference type="InterPro" id="IPR022832">
    <property type="entry name" value="Flippase_ArnF"/>
</dbReference>
<dbReference type="InterPro" id="IPR000390">
    <property type="entry name" value="Small_drug/metabolite_transptr"/>
</dbReference>
<dbReference type="NCBIfam" id="NF002816">
    <property type="entry name" value="PRK02971.1-2"/>
    <property type="match status" value="1"/>
</dbReference>
<dbReference type="PANTHER" id="PTHR30561:SF9">
    <property type="entry name" value="4-AMINO-4-DEOXY-L-ARABINOSE-PHOSPHOUNDECAPRENOL FLIPPASE SUBUNIT ARNF-RELATED"/>
    <property type="match status" value="1"/>
</dbReference>
<dbReference type="PANTHER" id="PTHR30561">
    <property type="entry name" value="SMR FAMILY PROTON-DEPENDENT DRUG EFFLUX TRANSPORTER SUGE"/>
    <property type="match status" value="1"/>
</dbReference>
<dbReference type="SUPFAM" id="SSF103481">
    <property type="entry name" value="Multidrug resistance efflux transporter EmrE"/>
    <property type="match status" value="1"/>
</dbReference>
<name>ARNF_SERP5</name>